<organism>
    <name type="scientific">Acanthamoeba polyphaga mimivirus</name>
    <name type="common">APMV</name>
    <dbReference type="NCBI Taxonomy" id="212035"/>
    <lineage>
        <taxon>Viruses</taxon>
        <taxon>Varidnaviria</taxon>
        <taxon>Bamfordvirae</taxon>
        <taxon>Nucleocytoviricota</taxon>
        <taxon>Megaviricetes</taxon>
        <taxon>Imitervirales</taxon>
        <taxon>Mimiviridae</taxon>
        <taxon>Megamimivirinae</taxon>
        <taxon>Mimivirus</taxon>
        <taxon>Mimivirus bradfordmassiliense</taxon>
    </lineage>
</organism>
<accession>Q5UQC1</accession>
<proteinExistence type="inferred from homology"/>
<organismHost>
    <name type="scientific">Acanthamoeba polyphaga</name>
    <name type="common">Amoeba</name>
    <dbReference type="NCBI Taxonomy" id="5757"/>
</organismHost>
<gene>
    <name type="ordered locus">MIMI_L232</name>
</gene>
<evidence type="ECO:0000255" key="1">
    <source>
        <dbReference type="PROSITE-ProRule" id="PRU00159"/>
    </source>
</evidence>
<evidence type="ECO:0000255" key="2">
    <source>
        <dbReference type="PROSITE-ProRule" id="PRU10028"/>
    </source>
</evidence>
<name>YL232_MIMIV</name>
<comment type="catalytic activity">
    <reaction>
        <text>L-seryl-[protein] + ATP = O-phospho-L-seryl-[protein] + ADP + H(+)</text>
        <dbReference type="Rhea" id="RHEA:17989"/>
        <dbReference type="Rhea" id="RHEA-COMP:9863"/>
        <dbReference type="Rhea" id="RHEA-COMP:11604"/>
        <dbReference type="ChEBI" id="CHEBI:15378"/>
        <dbReference type="ChEBI" id="CHEBI:29999"/>
        <dbReference type="ChEBI" id="CHEBI:30616"/>
        <dbReference type="ChEBI" id="CHEBI:83421"/>
        <dbReference type="ChEBI" id="CHEBI:456216"/>
        <dbReference type="EC" id="2.7.11.1"/>
    </reaction>
</comment>
<comment type="catalytic activity">
    <reaction>
        <text>L-threonyl-[protein] + ATP = O-phospho-L-threonyl-[protein] + ADP + H(+)</text>
        <dbReference type="Rhea" id="RHEA:46608"/>
        <dbReference type="Rhea" id="RHEA-COMP:11060"/>
        <dbReference type="Rhea" id="RHEA-COMP:11605"/>
        <dbReference type="ChEBI" id="CHEBI:15378"/>
        <dbReference type="ChEBI" id="CHEBI:30013"/>
        <dbReference type="ChEBI" id="CHEBI:30616"/>
        <dbReference type="ChEBI" id="CHEBI:61977"/>
        <dbReference type="ChEBI" id="CHEBI:456216"/>
        <dbReference type="EC" id="2.7.11.1"/>
    </reaction>
</comment>
<comment type="similarity">
    <text evidence="1">Belongs to the protein kinase superfamily. Ser/Thr protein kinase family.</text>
</comment>
<reference key="1">
    <citation type="journal article" date="2004" name="Science">
        <title>The 1.2-megabase genome sequence of Mimivirus.</title>
        <authorList>
            <person name="Raoult D."/>
            <person name="Audic S."/>
            <person name="Robert C."/>
            <person name="Abergel C."/>
            <person name="Renesto P."/>
            <person name="Ogata H."/>
            <person name="La Scola B."/>
            <person name="Susan M."/>
            <person name="Claverie J.-M."/>
        </authorList>
    </citation>
    <scope>NUCLEOTIDE SEQUENCE [LARGE SCALE GENOMIC DNA]</scope>
    <source>
        <strain>Rowbotham-Bradford</strain>
    </source>
</reference>
<protein>
    <recommendedName>
        <fullName>Putative serine/threonine-protein kinase L232</fullName>
        <ecNumber>2.7.11.1</ecNumber>
    </recommendedName>
</protein>
<feature type="chain" id="PRO_0000086847" description="Putative serine/threonine-protein kinase L232">
    <location>
        <begin position="1"/>
        <end position="633"/>
    </location>
</feature>
<feature type="domain" description="Protein kinase" evidence="1">
    <location>
        <begin position="10"/>
        <end position="314"/>
    </location>
</feature>
<feature type="active site" description="Proton acceptor" evidence="1 2">
    <location>
        <position position="133"/>
    </location>
</feature>
<feature type="binding site" evidence="1">
    <location>
        <begin position="16"/>
        <end position="24"/>
    </location>
    <ligand>
        <name>ATP</name>
        <dbReference type="ChEBI" id="CHEBI:30616"/>
    </ligand>
</feature>
<feature type="binding site" evidence="1">
    <location>
        <position position="39"/>
    </location>
    <ligand>
        <name>ATP</name>
        <dbReference type="ChEBI" id="CHEBI:30616"/>
    </ligand>
</feature>
<dbReference type="EC" id="2.7.11.1"/>
<dbReference type="EMBL" id="AY653733">
    <property type="protein sequence ID" value="AAV50505.1"/>
    <property type="molecule type" value="Genomic_DNA"/>
</dbReference>
<dbReference type="SMR" id="Q5UQC1"/>
<dbReference type="KEGG" id="vg:9924839"/>
<dbReference type="OrthoDB" id="30318at10239"/>
<dbReference type="Proteomes" id="UP000001134">
    <property type="component" value="Genome"/>
</dbReference>
<dbReference type="GO" id="GO:0005524">
    <property type="term" value="F:ATP binding"/>
    <property type="evidence" value="ECO:0007669"/>
    <property type="project" value="UniProtKB-KW"/>
</dbReference>
<dbReference type="GO" id="GO:0106310">
    <property type="term" value="F:protein serine kinase activity"/>
    <property type="evidence" value="ECO:0007669"/>
    <property type="project" value="RHEA"/>
</dbReference>
<dbReference type="GO" id="GO:0004674">
    <property type="term" value="F:protein serine/threonine kinase activity"/>
    <property type="evidence" value="ECO:0007669"/>
    <property type="project" value="UniProtKB-KW"/>
</dbReference>
<dbReference type="CDD" id="cd00180">
    <property type="entry name" value="PKc"/>
    <property type="match status" value="1"/>
</dbReference>
<dbReference type="Gene3D" id="3.30.200.20">
    <property type="entry name" value="Phosphorylase Kinase, domain 1"/>
    <property type="match status" value="1"/>
</dbReference>
<dbReference type="Gene3D" id="1.10.510.10">
    <property type="entry name" value="Transferase(Phosphotransferase) domain 1"/>
    <property type="match status" value="1"/>
</dbReference>
<dbReference type="InterPro" id="IPR050108">
    <property type="entry name" value="CDK"/>
</dbReference>
<dbReference type="InterPro" id="IPR011009">
    <property type="entry name" value="Kinase-like_dom_sf"/>
</dbReference>
<dbReference type="InterPro" id="IPR000719">
    <property type="entry name" value="Prot_kinase_dom"/>
</dbReference>
<dbReference type="InterPro" id="IPR008266">
    <property type="entry name" value="Tyr_kinase_AS"/>
</dbReference>
<dbReference type="PANTHER" id="PTHR24056">
    <property type="entry name" value="CELL DIVISION PROTEIN KINASE"/>
    <property type="match status" value="1"/>
</dbReference>
<dbReference type="Pfam" id="PF00069">
    <property type="entry name" value="Pkinase"/>
    <property type="match status" value="1"/>
</dbReference>
<dbReference type="SUPFAM" id="SSF56112">
    <property type="entry name" value="Protein kinase-like (PK-like)"/>
    <property type="match status" value="1"/>
</dbReference>
<dbReference type="PROSITE" id="PS50011">
    <property type="entry name" value="PROTEIN_KINASE_DOM"/>
    <property type="match status" value="1"/>
</dbReference>
<dbReference type="PROSITE" id="PS00109">
    <property type="entry name" value="PROTEIN_KINASE_TYR"/>
    <property type="match status" value="1"/>
</dbReference>
<keyword id="KW-0067">ATP-binding</keyword>
<keyword id="KW-0418">Kinase</keyword>
<keyword id="KW-0547">Nucleotide-binding</keyword>
<keyword id="KW-1185">Reference proteome</keyword>
<keyword id="KW-0723">Serine/threonine-protein kinase</keyword>
<keyword id="KW-0808">Transferase</keyword>
<sequence>MSNNIFTNNYTIVDKLSEGTYGIVYKVEHIESKKNFACKKFVIDNNFTYCNYNELIAHNEFNHSNLIEIYDILVDYGHDKCTYYVIMELCDGCLFDILFCDKVFLDESQRLDYLIQIIDGLEYMWSKGFVHNDLSLTNILVKNNKIKIADFGFMYNRFIKQDIYHRNTIYIQPPELISGHPRICDPNKIDTWALGQIFYVMCYNSVLYNYSNKTDYYLDIISKTNTPSLDIIDKLYLSDKYKKLYYNIFRKNIKKLTQNAINELVCYNKSTNKFSNDNLRKKTSSNKFIKKHMNWSVRHRPDIKQSRKLFYEILANKYPIYNSPIIQSIIPSTISFREFSFHKLWSSMNNYDYLFKSNLLFGIHFEYKIRLHHRFDYQYNLIVKIMLLMGKIIRSCFSKYNKFKCLNKFIYPNNNYLLSSQISRLENSFDRFYSMGKIIYCHYPFFENYIFDYDTIKLSNSLEFQYHFIDILDKEIPCLDAYDIFLLSNCNKMYQKYFKYMYYLFVSSPNATVFDNNIVYQSIMLIIISYKNSLIYKKLINQFLKLNISTKIKYSREINHCFNDDIINVIEIDNDYGINLNYFTVDTIITAYYIIHICRLITNEKYNLLNINFAIESKFIKYLDKLVSVIDME</sequence>